<comment type="subcellular location">
    <subcellularLocation>
        <location evidence="1">Cell inner membrane</location>
        <topology evidence="1">Multi-pass membrane protein</topology>
    </subcellularLocation>
</comment>
<comment type="similarity">
    <text evidence="1">Belongs to the UPF0266 family.</text>
</comment>
<gene>
    <name type="ordered locus">plu2700</name>
</gene>
<reference key="1">
    <citation type="journal article" date="2003" name="Nat. Biotechnol.">
        <title>The genome sequence of the entomopathogenic bacterium Photorhabdus luminescens.</title>
        <authorList>
            <person name="Duchaud E."/>
            <person name="Rusniok C."/>
            <person name="Frangeul L."/>
            <person name="Buchrieser C."/>
            <person name="Givaudan A."/>
            <person name="Taourit S."/>
            <person name="Bocs S."/>
            <person name="Boursaux-Eude C."/>
            <person name="Chandler M."/>
            <person name="Charles J.-F."/>
            <person name="Dassa E."/>
            <person name="Derose R."/>
            <person name="Derzelle S."/>
            <person name="Freyssinet G."/>
            <person name="Gaudriault S."/>
            <person name="Medigue C."/>
            <person name="Lanois A."/>
            <person name="Powell K."/>
            <person name="Siguier P."/>
            <person name="Vincent R."/>
            <person name="Wingate V."/>
            <person name="Zouine M."/>
            <person name="Glaser P."/>
            <person name="Boemare N."/>
            <person name="Danchin A."/>
            <person name="Kunst F."/>
        </authorList>
    </citation>
    <scope>NUCLEOTIDE SEQUENCE [LARGE SCALE GENOMIC DNA]</scope>
    <source>
        <strain>DSM 15139 / CIP 105565 / TT01</strain>
    </source>
</reference>
<dbReference type="EMBL" id="BX571868">
    <property type="protein sequence ID" value="CAE15074.1"/>
    <property type="molecule type" value="Genomic_DNA"/>
</dbReference>
<dbReference type="RefSeq" id="WP_011146922.1">
    <property type="nucleotide sequence ID" value="NC_005126.1"/>
</dbReference>
<dbReference type="STRING" id="243265.plu2700"/>
<dbReference type="GeneID" id="48848963"/>
<dbReference type="KEGG" id="plu:plu2700"/>
<dbReference type="eggNOG" id="COG4811">
    <property type="taxonomic scope" value="Bacteria"/>
</dbReference>
<dbReference type="HOGENOM" id="CLU_133645_0_0_6"/>
<dbReference type="OrthoDB" id="2360740at2"/>
<dbReference type="Proteomes" id="UP000002514">
    <property type="component" value="Chromosome"/>
</dbReference>
<dbReference type="GO" id="GO:0005886">
    <property type="term" value="C:plasma membrane"/>
    <property type="evidence" value="ECO:0007669"/>
    <property type="project" value="UniProtKB-SubCell"/>
</dbReference>
<dbReference type="HAMAP" id="MF_01071">
    <property type="entry name" value="UPF0266"/>
    <property type="match status" value="1"/>
</dbReference>
<dbReference type="InterPro" id="IPR009328">
    <property type="entry name" value="DUF986"/>
</dbReference>
<dbReference type="NCBIfam" id="NF002791">
    <property type="entry name" value="PRK02913.1"/>
    <property type="match status" value="1"/>
</dbReference>
<dbReference type="Pfam" id="PF06173">
    <property type="entry name" value="DUF986"/>
    <property type="match status" value="1"/>
</dbReference>
<dbReference type="PIRSF" id="PIRSF020687">
    <property type="entry name" value="UCP020687"/>
    <property type="match status" value="1"/>
</dbReference>
<proteinExistence type="inferred from homology"/>
<accession>Q7N3L5</accession>
<feature type="chain" id="PRO_0000218119" description="UPF0266 membrane protein plu2700">
    <location>
        <begin position="1"/>
        <end position="152"/>
    </location>
</feature>
<feature type="transmembrane region" description="Helical" evidence="1">
    <location>
        <begin position="6"/>
        <end position="26"/>
    </location>
</feature>
<feature type="transmembrane region" description="Helical" evidence="1">
    <location>
        <begin position="45"/>
        <end position="65"/>
    </location>
</feature>
<feature type="transmembrane region" description="Helical" evidence="1">
    <location>
        <begin position="67"/>
        <end position="87"/>
    </location>
</feature>
<keyword id="KW-0997">Cell inner membrane</keyword>
<keyword id="KW-1003">Cell membrane</keyword>
<keyword id="KW-0472">Membrane</keyword>
<keyword id="KW-1185">Reference proteome</keyword>
<keyword id="KW-0812">Transmembrane</keyword>
<keyword id="KW-1133">Transmembrane helix</keyword>
<organism>
    <name type="scientific">Photorhabdus laumondii subsp. laumondii (strain DSM 15139 / CIP 105565 / TT01)</name>
    <name type="common">Photorhabdus luminescens subsp. laumondii</name>
    <dbReference type="NCBI Taxonomy" id="243265"/>
    <lineage>
        <taxon>Bacteria</taxon>
        <taxon>Pseudomonadati</taxon>
        <taxon>Pseudomonadota</taxon>
        <taxon>Gammaproteobacteria</taxon>
        <taxon>Enterobacterales</taxon>
        <taxon>Morganellaceae</taxon>
        <taxon>Photorhabdus</taxon>
    </lineage>
</organism>
<sequence>MNLNDIALTGLIVLMLAFAVYDEFVVNFLKGKTHLQIKLKRKHKIDALIFIILILIVVYNNITVYGSRLTTYLLLFTILVTIYIAYIRSPKLFFKNNGFFYANTFISYSRIKTMNLSEDGILVIGLENKKLYISVSQIDDLERIYKFLIENR</sequence>
<evidence type="ECO:0000255" key="1">
    <source>
        <dbReference type="HAMAP-Rule" id="MF_01071"/>
    </source>
</evidence>
<name>Y2700_PHOLL</name>
<protein>
    <recommendedName>
        <fullName evidence="1">UPF0266 membrane protein plu2700</fullName>
    </recommendedName>
</protein>